<dbReference type="EMBL" id="AE017244">
    <property type="protein sequence ID" value="AAZ53427.2"/>
    <property type="molecule type" value="Genomic_DNA"/>
</dbReference>
<dbReference type="RefSeq" id="WP_044272289.1">
    <property type="nucleotide sequence ID" value="NC_007332.1"/>
</dbReference>
<dbReference type="SMR" id="Q4A8W2"/>
<dbReference type="KEGG" id="mhp:MHP7448_0050"/>
<dbReference type="HOGENOM" id="CLU_085114_4_2_14"/>
<dbReference type="Proteomes" id="UP000000553">
    <property type="component" value="Chromosome"/>
</dbReference>
<dbReference type="GO" id="GO:0005886">
    <property type="term" value="C:plasma membrane"/>
    <property type="evidence" value="ECO:0007669"/>
    <property type="project" value="UniProtKB-SubCell"/>
</dbReference>
<dbReference type="GO" id="GO:0045259">
    <property type="term" value="C:proton-transporting ATP synthase complex"/>
    <property type="evidence" value="ECO:0007669"/>
    <property type="project" value="UniProtKB-KW"/>
</dbReference>
<dbReference type="GO" id="GO:0046933">
    <property type="term" value="F:proton-transporting ATP synthase activity, rotational mechanism"/>
    <property type="evidence" value="ECO:0007669"/>
    <property type="project" value="UniProtKB-UniRule"/>
</dbReference>
<dbReference type="Gene3D" id="1.10.520.20">
    <property type="entry name" value="N-terminal domain of the delta subunit of the F1F0-ATP synthase"/>
    <property type="match status" value="1"/>
</dbReference>
<dbReference type="HAMAP" id="MF_01416">
    <property type="entry name" value="ATP_synth_delta_bact"/>
    <property type="match status" value="1"/>
</dbReference>
<dbReference type="InterPro" id="IPR026015">
    <property type="entry name" value="ATP_synth_OSCP/delta_N_sf"/>
</dbReference>
<dbReference type="InterPro" id="IPR000711">
    <property type="entry name" value="ATPase_OSCP/dsu"/>
</dbReference>
<dbReference type="NCBIfam" id="TIGR01145">
    <property type="entry name" value="ATP_synt_delta"/>
    <property type="match status" value="1"/>
</dbReference>
<dbReference type="NCBIfam" id="NF009975">
    <property type="entry name" value="PRK13436.1"/>
    <property type="match status" value="1"/>
</dbReference>
<dbReference type="PANTHER" id="PTHR11910">
    <property type="entry name" value="ATP SYNTHASE DELTA CHAIN"/>
    <property type="match status" value="1"/>
</dbReference>
<dbReference type="Pfam" id="PF00213">
    <property type="entry name" value="OSCP"/>
    <property type="match status" value="1"/>
</dbReference>
<dbReference type="PRINTS" id="PR00125">
    <property type="entry name" value="ATPASEDELTA"/>
</dbReference>
<dbReference type="SUPFAM" id="SSF47928">
    <property type="entry name" value="N-terminal domain of the delta subunit of the F1F0-ATP synthase"/>
    <property type="match status" value="1"/>
</dbReference>
<comment type="function">
    <text evidence="1">F(1)F(0) ATP synthase produces ATP from ADP in the presence of a proton or sodium gradient. F-type ATPases consist of two structural domains, F(1) containing the extramembraneous catalytic core and F(0) containing the membrane proton channel, linked together by a central stalk and a peripheral stalk. During catalysis, ATP synthesis in the catalytic domain of F(1) is coupled via a rotary mechanism of the central stalk subunits to proton translocation.</text>
</comment>
<comment type="function">
    <text evidence="1">This protein is part of the stalk that links CF(0) to CF(1). It either transmits conformational changes from CF(0) to CF(1) or is implicated in proton conduction.</text>
</comment>
<comment type="subunit">
    <text evidence="1">F-type ATPases have 2 components, F(1) - the catalytic core - and F(0) - the membrane proton channel. F(1) has five subunits: alpha(3), beta(3), gamma(1), delta(1), epsilon(1). F(0) has three main subunits: a(1), b(2) and c(10-14). The alpha and beta chains form an alternating ring which encloses part of the gamma chain. F(1) is attached to F(0) by a central stalk formed by the gamma and epsilon chains, while a peripheral stalk is formed by the delta and b chains.</text>
</comment>
<comment type="subcellular location">
    <subcellularLocation>
        <location evidence="1">Cell membrane</location>
        <topology evidence="1">Peripheral membrane protein</topology>
    </subcellularLocation>
</comment>
<comment type="similarity">
    <text evidence="1">Belongs to the ATPase delta chain family.</text>
</comment>
<accession>Q4A8W2</accession>
<reference key="1">
    <citation type="journal article" date="2005" name="J. Bacteriol.">
        <title>Swine and poultry pathogens: the complete genome sequences of two strains of Mycoplasma hyopneumoniae and a strain of Mycoplasma synoviae.</title>
        <authorList>
            <person name="Vasconcelos A.T.R."/>
            <person name="Ferreira H.B."/>
            <person name="Bizarro C.V."/>
            <person name="Bonatto S.L."/>
            <person name="Carvalho M.O."/>
            <person name="Pinto P.M."/>
            <person name="Almeida D.F."/>
            <person name="Almeida L.G.P."/>
            <person name="Almeida R."/>
            <person name="Alves-Junior L."/>
            <person name="Assuncao E.N."/>
            <person name="Azevedo V.A.C."/>
            <person name="Bogo M.R."/>
            <person name="Brigido M.M."/>
            <person name="Brocchi M."/>
            <person name="Burity H.A."/>
            <person name="Camargo A.A."/>
            <person name="Camargo S.S."/>
            <person name="Carepo M.S."/>
            <person name="Carraro D.M."/>
            <person name="de Mattos Cascardo J.C."/>
            <person name="Castro L.A."/>
            <person name="Cavalcanti G."/>
            <person name="Chemale G."/>
            <person name="Collevatti R.G."/>
            <person name="Cunha C.W."/>
            <person name="Dallagiovanna B."/>
            <person name="Dambros B.P."/>
            <person name="Dellagostin O.A."/>
            <person name="Falcao C."/>
            <person name="Fantinatti-Garboggini F."/>
            <person name="Felipe M.S.S."/>
            <person name="Fiorentin L."/>
            <person name="Franco G.R."/>
            <person name="Freitas N.S.A."/>
            <person name="Frias D."/>
            <person name="Grangeiro T.B."/>
            <person name="Grisard E.C."/>
            <person name="Guimaraes C.T."/>
            <person name="Hungria M."/>
            <person name="Jardim S.N."/>
            <person name="Krieger M.A."/>
            <person name="Laurino J.P."/>
            <person name="Lima L.F.A."/>
            <person name="Lopes M.I."/>
            <person name="Loreto E.L.S."/>
            <person name="Madeira H.M.F."/>
            <person name="Manfio G.P."/>
            <person name="Maranhao A.Q."/>
            <person name="Martinkovics C.T."/>
            <person name="Medeiros S.R.B."/>
            <person name="Moreira M.A.M."/>
            <person name="Neiva M."/>
            <person name="Ramalho-Neto C.E."/>
            <person name="Nicolas M.F."/>
            <person name="Oliveira S.C."/>
            <person name="Paixao R.F.C."/>
            <person name="Pedrosa F.O."/>
            <person name="Pena S.D.J."/>
            <person name="Pereira M."/>
            <person name="Pereira-Ferrari L."/>
            <person name="Piffer I."/>
            <person name="Pinto L.S."/>
            <person name="Potrich D.P."/>
            <person name="Salim A.C.M."/>
            <person name="Santos F.R."/>
            <person name="Schmitt R."/>
            <person name="Schneider M.P.C."/>
            <person name="Schrank A."/>
            <person name="Schrank I.S."/>
            <person name="Schuck A.F."/>
            <person name="Seuanez H.N."/>
            <person name="Silva D.W."/>
            <person name="Silva R."/>
            <person name="Silva S.C."/>
            <person name="Soares C.M.A."/>
            <person name="Souza K.R.L."/>
            <person name="Souza R.C."/>
            <person name="Staats C.C."/>
            <person name="Steffens M.B.R."/>
            <person name="Teixeira S.M.R."/>
            <person name="Urmenyi T.P."/>
            <person name="Vainstein M.H."/>
            <person name="Zuccherato L.W."/>
            <person name="Simpson A.J.G."/>
            <person name="Zaha A."/>
        </authorList>
    </citation>
    <scope>NUCLEOTIDE SEQUENCE [LARGE SCALE GENOMIC DNA]</scope>
    <source>
        <strain>7448</strain>
    </source>
</reference>
<feature type="chain" id="PRO_0000371029" description="ATP synthase subunit delta">
    <location>
        <begin position="1"/>
        <end position="187"/>
    </location>
</feature>
<evidence type="ECO:0000255" key="1">
    <source>
        <dbReference type="HAMAP-Rule" id="MF_01416"/>
    </source>
</evidence>
<gene>
    <name evidence="1" type="primary">atpH</name>
    <name type="ordered locus">MHP7448_0050</name>
</gene>
<proteinExistence type="inferred from homology"/>
<organism>
    <name type="scientific">Mesomycoplasma hyopneumoniae (strain 7448)</name>
    <name type="common">Mycoplasma hyopneumoniae</name>
    <dbReference type="NCBI Taxonomy" id="262722"/>
    <lineage>
        <taxon>Bacteria</taxon>
        <taxon>Bacillati</taxon>
        <taxon>Mycoplasmatota</taxon>
        <taxon>Mycoplasmoidales</taxon>
        <taxon>Metamycoplasmataceae</taxon>
        <taxon>Mesomycoplasma</taxon>
    </lineage>
</organism>
<keyword id="KW-0066">ATP synthesis</keyword>
<keyword id="KW-1003">Cell membrane</keyword>
<keyword id="KW-0139">CF(1)</keyword>
<keyword id="KW-0375">Hydrogen ion transport</keyword>
<keyword id="KW-0406">Ion transport</keyword>
<keyword id="KW-0472">Membrane</keyword>
<keyword id="KW-0813">Transport</keyword>
<sequence length="187" mass="21844">MYLYKKNYYGYAESLLDISISENNVEKYINDCFFILSIIQNNQVLILLFKSHFVGKQEKFNIIDKIFSAKIEKILVNFLKVIAKNNLFLHYKQILLKYIKLANSHLSQTWGEIETAFPISSVMTSSFESILSKKLGKKVHLRHKINSKLISGIRIIVDNQIFENSLFSELKLLKQNLKKHLITKNDL</sequence>
<name>ATPD_MESH7</name>
<protein>
    <recommendedName>
        <fullName evidence="1">ATP synthase subunit delta</fullName>
    </recommendedName>
    <alternativeName>
        <fullName evidence="1">ATP synthase F(1) sector subunit delta</fullName>
    </alternativeName>
    <alternativeName>
        <fullName evidence="1">F-type ATPase subunit delta</fullName>
        <shortName evidence="1">F-ATPase subunit delta</shortName>
    </alternativeName>
</protein>